<geneLocation type="mitochondrion"/>
<feature type="chain" id="PRO_0000118005" description="NADH-ubiquinone oxidoreductase chain 4">
    <location>
        <begin position="1"/>
        <end position="486"/>
    </location>
</feature>
<feature type="transmembrane region" description="Helical" evidence="2">
    <location>
        <begin position="26"/>
        <end position="46"/>
    </location>
</feature>
<feature type="transmembrane region" description="Helical" evidence="2">
    <location>
        <begin position="76"/>
        <end position="96"/>
    </location>
</feature>
<feature type="transmembrane region" description="Helical" evidence="2">
    <location>
        <begin position="113"/>
        <end position="132"/>
    </location>
</feature>
<feature type="transmembrane region" description="Helical" evidence="2">
    <location>
        <begin position="134"/>
        <end position="156"/>
    </location>
</feature>
<feature type="transmembrane region" description="Helical" evidence="2">
    <location>
        <begin position="165"/>
        <end position="185"/>
    </location>
</feature>
<feature type="transmembrane region" description="Helical" evidence="2">
    <location>
        <begin position="209"/>
        <end position="231"/>
    </location>
</feature>
<feature type="transmembrane region" description="Helical" evidence="2">
    <location>
        <begin position="239"/>
        <end position="259"/>
    </location>
</feature>
<feature type="transmembrane region" description="Helical" evidence="2">
    <location>
        <begin position="271"/>
        <end position="291"/>
    </location>
</feature>
<feature type="transmembrane region" description="Helical" evidence="2">
    <location>
        <begin position="298"/>
        <end position="318"/>
    </location>
</feature>
<feature type="transmembrane region" description="Helical" evidence="2">
    <location>
        <begin position="329"/>
        <end position="349"/>
    </location>
</feature>
<feature type="transmembrane region" description="Helical" evidence="2">
    <location>
        <begin position="372"/>
        <end position="392"/>
    </location>
</feature>
<feature type="transmembrane region" description="Helical" evidence="2">
    <location>
        <begin position="407"/>
        <end position="427"/>
    </location>
</feature>
<feature type="transmembrane region" description="Helical" evidence="2">
    <location>
        <begin position="452"/>
        <end position="472"/>
    </location>
</feature>
<feature type="helix" evidence="7">
    <location>
        <begin position="7"/>
        <end position="21"/>
    </location>
</feature>
<feature type="helix" evidence="7">
    <location>
        <begin position="25"/>
        <end position="44"/>
    </location>
</feature>
<feature type="strand" evidence="7">
    <location>
        <begin position="57"/>
        <end position="61"/>
    </location>
</feature>
<feature type="strand" evidence="7">
    <location>
        <begin position="64"/>
        <end position="68"/>
    </location>
</feature>
<feature type="strand" evidence="7">
    <location>
        <begin position="76"/>
        <end position="79"/>
    </location>
</feature>
<feature type="helix" evidence="7">
    <location>
        <begin position="83"/>
        <end position="101"/>
    </location>
</feature>
<feature type="turn" evidence="7">
    <location>
        <begin position="102"/>
        <end position="106"/>
    </location>
</feature>
<feature type="helix" evidence="7">
    <location>
        <begin position="111"/>
        <end position="130"/>
    </location>
</feature>
<feature type="helix" evidence="7">
    <location>
        <begin position="134"/>
        <end position="155"/>
    </location>
</feature>
<feature type="strand" evidence="5">
    <location>
        <begin position="157"/>
        <end position="159"/>
    </location>
</feature>
<feature type="helix" evidence="7">
    <location>
        <begin position="160"/>
        <end position="189"/>
    </location>
</feature>
<feature type="strand" evidence="7">
    <location>
        <begin position="193"/>
        <end position="196"/>
    </location>
</feature>
<feature type="helix" evidence="7">
    <location>
        <begin position="197"/>
        <end position="199"/>
    </location>
</feature>
<feature type="helix" evidence="7">
    <location>
        <begin position="204"/>
        <end position="221"/>
    </location>
</feature>
<feature type="helix" evidence="6">
    <location>
        <begin position="225"/>
        <end position="227"/>
    </location>
</feature>
<feature type="helix" evidence="7">
    <location>
        <begin position="230"/>
        <end position="237"/>
    </location>
</feature>
<feature type="helix" evidence="7">
    <location>
        <begin position="240"/>
        <end position="248"/>
    </location>
</feature>
<feature type="helix" evidence="7">
    <location>
        <begin position="250"/>
        <end position="261"/>
    </location>
</feature>
<feature type="turn" evidence="7">
    <location>
        <begin position="262"/>
        <end position="265"/>
    </location>
</feature>
<feature type="helix" evidence="7">
    <location>
        <begin position="267"/>
        <end position="292"/>
    </location>
</feature>
<feature type="helix" evidence="7">
    <location>
        <begin position="298"/>
        <end position="317"/>
    </location>
</feature>
<feature type="strand" evidence="7">
    <location>
        <begin position="319"/>
        <end position="321"/>
    </location>
</feature>
<feature type="helix" evidence="7">
    <location>
        <begin position="322"/>
        <end position="348"/>
    </location>
</feature>
<feature type="helix" evidence="7">
    <location>
        <begin position="350"/>
        <end position="354"/>
    </location>
</feature>
<feature type="helix" evidence="7">
    <location>
        <begin position="359"/>
        <end position="361"/>
    </location>
</feature>
<feature type="turn" evidence="7">
    <location>
        <begin position="365"/>
        <end position="368"/>
    </location>
</feature>
<feature type="helix" evidence="7">
    <location>
        <begin position="370"/>
        <end position="383"/>
    </location>
</feature>
<feature type="helix" evidence="7">
    <location>
        <begin position="390"/>
        <end position="405"/>
    </location>
</feature>
<feature type="helix" evidence="7">
    <location>
        <begin position="407"/>
        <end position="413"/>
    </location>
</feature>
<feature type="helix" evidence="7">
    <location>
        <begin position="416"/>
        <end position="432"/>
    </location>
</feature>
<feature type="strand" evidence="7">
    <location>
        <begin position="433"/>
        <end position="435"/>
    </location>
</feature>
<feature type="strand" evidence="7">
    <location>
        <begin position="438"/>
        <end position="440"/>
    </location>
</feature>
<feature type="helix" evidence="7">
    <location>
        <begin position="448"/>
        <end position="466"/>
    </location>
</feature>
<feature type="helix" evidence="7">
    <location>
        <begin position="468"/>
        <end position="471"/>
    </location>
</feature>
<feature type="helix" evidence="7">
    <location>
        <begin position="472"/>
        <end position="475"/>
    </location>
</feature>
<feature type="helix" evidence="7">
    <location>
        <begin position="478"/>
        <end position="481"/>
    </location>
</feature>
<keyword id="KW-0002">3D-structure</keyword>
<keyword id="KW-0249">Electron transport</keyword>
<keyword id="KW-0472">Membrane</keyword>
<keyword id="KW-0496">Mitochondrion</keyword>
<keyword id="KW-0520">NAD</keyword>
<keyword id="KW-1185">Reference proteome</keyword>
<keyword id="KW-0679">Respiratory chain</keyword>
<keyword id="KW-1278">Translocase</keyword>
<keyword id="KW-0812">Transmembrane</keyword>
<keyword id="KW-1133">Transmembrane helix</keyword>
<keyword id="KW-0813">Transport</keyword>
<keyword id="KW-0830">Ubiquinone</keyword>
<accession>Q9B6D6</accession>
<reference key="1">
    <citation type="journal article" date="2001" name="Comp. Funct. Genomics">
        <title>The complete mitochondrial genome of Yarrowia lipolytica.</title>
        <authorList>
            <person name="Kerscher S."/>
            <person name="Durstewitz G."/>
            <person name="Casaregola S."/>
            <person name="Gaillardin C."/>
            <person name="Brandt U."/>
        </authorList>
    </citation>
    <scope>NUCLEOTIDE SEQUENCE [LARGE SCALE GENOMIC DNA]</scope>
    <source>
        <strain>ATCC 20460 / W29 / CBS 7504 / IFP29</strain>
    </source>
</reference>
<reference key="2">
    <citation type="journal article" date="2004" name="Biochim. Biophys. Acta">
        <title>Subunit composition of mitochondrial complex I from the yeast Yarrowia lipolytica.</title>
        <authorList>
            <person name="Abdrakhmanova A."/>
            <person name="Zickermann V."/>
            <person name="Bostina M."/>
            <person name="Radermacher M."/>
            <person name="Schagger H."/>
            <person name="Kerscher S."/>
            <person name="Brandt U."/>
        </authorList>
    </citation>
    <scope>SUBUNIT</scope>
</reference>
<protein>
    <recommendedName>
        <fullName>NADH-ubiquinone oxidoreductase chain 4</fullName>
        <ecNumber>7.1.1.2</ecNumber>
    </recommendedName>
    <alternativeName>
        <fullName>NADH dehydrogenase subunit 4</fullName>
    </alternativeName>
</protein>
<dbReference type="EC" id="7.1.1.2"/>
<dbReference type="EMBL" id="AJ307410">
    <property type="protein sequence ID" value="CAC28103.2"/>
    <property type="molecule type" value="Genomic_DNA"/>
</dbReference>
<dbReference type="PIR" id="S51503">
    <property type="entry name" value="S51503"/>
</dbReference>
<dbReference type="RefSeq" id="NP_075436.2">
    <property type="nucleotide sequence ID" value="NC_002659.1"/>
</dbReference>
<dbReference type="PDB" id="6GCS">
    <property type="method" value="EM"/>
    <property type="resolution" value="4.32 A"/>
    <property type="chains" value="4=1-486"/>
</dbReference>
<dbReference type="PDB" id="6H8K">
    <property type="method" value="X-ray"/>
    <property type="resolution" value="3.79 A"/>
    <property type="chains" value="4=136-471"/>
</dbReference>
<dbReference type="PDB" id="6RFQ">
    <property type="method" value="EM"/>
    <property type="resolution" value="3.30 A"/>
    <property type="chains" value="4=1-486"/>
</dbReference>
<dbReference type="PDB" id="6RFR">
    <property type="method" value="EM"/>
    <property type="resolution" value="3.20 A"/>
    <property type="chains" value="4=1-486"/>
</dbReference>
<dbReference type="PDB" id="6RFS">
    <property type="method" value="EM"/>
    <property type="resolution" value="4.04 A"/>
    <property type="chains" value="4=1-486"/>
</dbReference>
<dbReference type="PDB" id="6Y79">
    <property type="method" value="EM"/>
    <property type="resolution" value="3.20 A"/>
    <property type="chains" value="4=1-486"/>
</dbReference>
<dbReference type="PDB" id="6YJ4">
    <property type="method" value="EM"/>
    <property type="resolution" value="2.70 A"/>
    <property type="chains" value="M=1-486"/>
</dbReference>
<dbReference type="PDB" id="7O6Y">
    <property type="method" value="EM"/>
    <property type="resolution" value="3.40 A"/>
    <property type="chains" value="4=1-486"/>
</dbReference>
<dbReference type="PDB" id="7O71">
    <property type="method" value="EM"/>
    <property type="resolution" value="2.40 A"/>
    <property type="chains" value="4=1-486"/>
</dbReference>
<dbReference type="PDBsum" id="6GCS"/>
<dbReference type="PDBsum" id="6H8K"/>
<dbReference type="PDBsum" id="6RFQ"/>
<dbReference type="PDBsum" id="6RFR"/>
<dbReference type="PDBsum" id="6RFS"/>
<dbReference type="PDBsum" id="6Y79"/>
<dbReference type="PDBsum" id="6YJ4"/>
<dbReference type="PDBsum" id="7O6Y"/>
<dbReference type="PDBsum" id="7O71"/>
<dbReference type="EMDB" id="EMD-10815"/>
<dbReference type="EMDB" id="EMD-12742"/>
<dbReference type="EMDB" id="EMD-4384"/>
<dbReference type="SMR" id="Q9B6D6"/>
<dbReference type="DIP" id="DIP-61439N"/>
<dbReference type="IntAct" id="Q9B6D6">
    <property type="interactions" value="2"/>
</dbReference>
<dbReference type="STRING" id="284591.Q9B6D6"/>
<dbReference type="GeneID" id="802604"/>
<dbReference type="KEGG" id="yli:802604"/>
<dbReference type="InParanoid" id="Q9B6D6"/>
<dbReference type="Proteomes" id="UP000001300">
    <property type="component" value="Mitochondrion"/>
</dbReference>
<dbReference type="GO" id="GO:0031966">
    <property type="term" value="C:mitochondrial membrane"/>
    <property type="evidence" value="ECO:0007669"/>
    <property type="project" value="UniProtKB-SubCell"/>
</dbReference>
<dbReference type="GO" id="GO:0045271">
    <property type="term" value="C:respiratory chain complex I"/>
    <property type="evidence" value="ECO:0000318"/>
    <property type="project" value="GO_Central"/>
</dbReference>
<dbReference type="GO" id="GO:0008137">
    <property type="term" value="F:NADH dehydrogenase (ubiquinone) activity"/>
    <property type="evidence" value="ECO:0007669"/>
    <property type="project" value="UniProtKB-EC"/>
</dbReference>
<dbReference type="GO" id="GO:0048039">
    <property type="term" value="F:ubiquinone binding"/>
    <property type="evidence" value="ECO:0000318"/>
    <property type="project" value="GO_Central"/>
</dbReference>
<dbReference type="GO" id="GO:0009060">
    <property type="term" value="P:aerobic respiration"/>
    <property type="evidence" value="ECO:0000318"/>
    <property type="project" value="GO_Central"/>
</dbReference>
<dbReference type="GO" id="GO:0042773">
    <property type="term" value="P:ATP synthesis coupled electron transport"/>
    <property type="evidence" value="ECO:0007669"/>
    <property type="project" value="InterPro"/>
</dbReference>
<dbReference type="GO" id="GO:0015990">
    <property type="term" value="P:electron transport coupled proton transport"/>
    <property type="evidence" value="ECO:0000318"/>
    <property type="project" value="GO_Central"/>
</dbReference>
<dbReference type="InterPro" id="IPR010227">
    <property type="entry name" value="NADH_Q_OxRdtase_chainM/4"/>
</dbReference>
<dbReference type="InterPro" id="IPR003918">
    <property type="entry name" value="NADH_UbQ_OxRdtase"/>
</dbReference>
<dbReference type="InterPro" id="IPR001750">
    <property type="entry name" value="ND/Mrp_TM"/>
</dbReference>
<dbReference type="NCBIfam" id="TIGR01972">
    <property type="entry name" value="NDH_I_M"/>
    <property type="match status" value="1"/>
</dbReference>
<dbReference type="PANTHER" id="PTHR43507">
    <property type="entry name" value="NADH-UBIQUINONE OXIDOREDUCTASE CHAIN 4"/>
    <property type="match status" value="1"/>
</dbReference>
<dbReference type="PANTHER" id="PTHR43507:SF1">
    <property type="entry name" value="NADH-UBIQUINONE OXIDOREDUCTASE CHAIN 4"/>
    <property type="match status" value="1"/>
</dbReference>
<dbReference type="Pfam" id="PF00361">
    <property type="entry name" value="Proton_antipo_M"/>
    <property type="match status" value="1"/>
</dbReference>
<dbReference type="PRINTS" id="PR01437">
    <property type="entry name" value="NUOXDRDTASE4"/>
</dbReference>
<gene>
    <name type="primary">ND4</name>
</gene>
<evidence type="ECO:0000250" key="1"/>
<evidence type="ECO:0000255" key="2"/>
<evidence type="ECO:0000269" key="3">
    <source>
    </source>
</evidence>
<evidence type="ECO:0000305" key="4"/>
<evidence type="ECO:0007829" key="5">
    <source>
        <dbReference type="PDB" id="6RFQ"/>
    </source>
</evidence>
<evidence type="ECO:0007829" key="6">
    <source>
        <dbReference type="PDB" id="6Y79"/>
    </source>
</evidence>
<evidence type="ECO:0007829" key="7">
    <source>
        <dbReference type="PDB" id="7O71"/>
    </source>
</evidence>
<sequence length="486" mass="54481">MFLTSILLSSLYLFNRILAWQGNVKHFYLFASNLLLLFIVVLYINFNTFSNSFQFNFELFNSLNPFGLSNSDISNGLLFGIDGLSLTFILLTVLLIPLTLLGNWYNINFNSNLYYTLVLAIGLVILLNFWALDYISFYILFEATLPLLFILIHIYGSSDSERASFYVLMFTLSGSLFMLLSIVVISIVLNTTNFINHNLFVLSLDLQTIIWLGLFIAIMVKTPLFPIHVWLPVVHSESPLAGSMILAGLILKLALYAILRLLLPLLCEAQILYTPMIYIISLLTIILTSLATLRQIDLKVIIAYSSISHMGIAILGVCSNTSLGIYGSIVLGVAHGFVSPALFLIVGGILYDRYHIRIVNYYKGLTTYMPQLATYIIILSFANIGTPLTGNFTGEFLSLQGGFIRNPIIGGISCISVLLAAIYQLKLTNKLTGGISSIYMHRTNDVTIREKFIMNILIISTLIIGICPQIMYNLLYWTVNNYIYII</sequence>
<name>NU4M_YARLI</name>
<comment type="function">
    <text>Core subunit of the mitochondrial membrane respiratory chain NADH dehydrogenase (Complex I) that is believed to belong to the minimal assembly required for catalysis. Complex I functions in the transfer of electrons from NADH to the respiratory chain. The immediate electron acceptor for the enzyme is believed to be ubiquinone.</text>
</comment>
<comment type="catalytic activity">
    <reaction>
        <text>a ubiquinone + NADH + 5 H(+)(in) = a ubiquinol + NAD(+) + 4 H(+)(out)</text>
        <dbReference type="Rhea" id="RHEA:29091"/>
        <dbReference type="Rhea" id="RHEA-COMP:9565"/>
        <dbReference type="Rhea" id="RHEA-COMP:9566"/>
        <dbReference type="ChEBI" id="CHEBI:15378"/>
        <dbReference type="ChEBI" id="CHEBI:16389"/>
        <dbReference type="ChEBI" id="CHEBI:17976"/>
        <dbReference type="ChEBI" id="CHEBI:57540"/>
        <dbReference type="ChEBI" id="CHEBI:57945"/>
        <dbReference type="EC" id="7.1.1.2"/>
    </reaction>
</comment>
<comment type="subunit">
    <text evidence="3">Complex I is composed of 37 different subunits.</text>
</comment>
<comment type="subcellular location">
    <subcellularLocation>
        <location evidence="1">Mitochondrion membrane</location>
        <topology evidence="1">Multi-pass membrane protein</topology>
    </subcellularLocation>
</comment>
<comment type="similarity">
    <text evidence="4">Belongs to the complex I subunit 4 family.</text>
</comment>
<organism>
    <name type="scientific">Yarrowia lipolytica (strain CLIB 122 / E 150)</name>
    <name type="common">Yeast</name>
    <name type="synonym">Candida lipolytica</name>
    <dbReference type="NCBI Taxonomy" id="284591"/>
    <lineage>
        <taxon>Eukaryota</taxon>
        <taxon>Fungi</taxon>
        <taxon>Dikarya</taxon>
        <taxon>Ascomycota</taxon>
        <taxon>Saccharomycotina</taxon>
        <taxon>Dipodascomycetes</taxon>
        <taxon>Dipodascales</taxon>
        <taxon>Dipodascales incertae sedis</taxon>
        <taxon>Yarrowia</taxon>
    </lineage>
</organism>
<proteinExistence type="evidence at protein level"/>